<name>YM304_YEAST</name>
<sequence>MIYGKMMGNTVLKNTGVFYQVIKPLKLHLLYDHSFSLFLKKQPNMGEISPFPYLLSYSYHVIVYLCVLCKVYILYSFVKDFSICLPFSYGSSLLYSLCSNLYIYIYAALPKSKIKL</sequence>
<proteinExistence type="uncertain"/>
<dbReference type="EMBL" id="KJ412295">
    <property type="protein sequence ID" value="AHX39338.1"/>
    <property type="molecule type" value="Genomic_DNA"/>
</dbReference>
<dbReference type="PIR" id="S69861">
    <property type="entry name" value="S69861"/>
</dbReference>
<dbReference type="STRING" id="4932.YMR304C-A"/>
<dbReference type="PaxDb" id="4932-YMR304C-A"/>
<dbReference type="EnsemblFungi" id="YMR304C-A_mRNA">
    <property type="protein sequence ID" value="YMR304C-A"/>
    <property type="gene ID" value="YMR304C-A"/>
</dbReference>
<dbReference type="AGR" id="SGD:S000004919"/>
<dbReference type="SGD" id="S000004919">
    <property type="gene designation" value="YMR304C-A"/>
</dbReference>
<dbReference type="HOGENOM" id="CLU_2211457_0_0_1"/>
<dbReference type="GO" id="GO:0016020">
    <property type="term" value="C:membrane"/>
    <property type="evidence" value="ECO:0007669"/>
    <property type="project" value="UniProtKB-SubCell"/>
</dbReference>
<feature type="chain" id="PRO_0000431051" description="Putative uncharacterized membrane protein YMR304C-A">
    <location>
        <begin position="1"/>
        <end position="116"/>
    </location>
</feature>
<feature type="transmembrane region" description="Helical; Name=1" evidence="1">
    <location>
        <begin position="55"/>
        <end position="77"/>
    </location>
</feature>
<feature type="transmembrane region" description="Helical; Name=2" evidence="1">
    <location>
        <begin position="87"/>
        <end position="109"/>
    </location>
</feature>
<comment type="subcellular location">
    <subcellularLocation>
        <location evidence="1">Membrane</location>
        <topology evidence="1">Multi-pass membrane protein</topology>
    </subcellularLocation>
</comment>
<comment type="miscellaneous">
    <text evidence="2">Partially overlaps SCW10.</text>
</comment>
<comment type="caution">
    <text evidence="3">Product of a dubious gene prediction unlikely to encode a functional protein. Because of that it is not part of the S.cerevisiae S288c complete/reference proteome set.</text>
</comment>
<protein>
    <recommendedName>
        <fullName evidence="2">Putative uncharacterized membrane protein YMR304C-A</fullName>
    </recommendedName>
</protein>
<keyword id="KW-0472">Membrane</keyword>
<keyword id="KW-0812">Transmembrane</keyword>
<keyword id="KW-1133">Transmembrane helix</keyword>
<gene>
    <name evidence="4" type="ordered locus">YMR304C-A</name>
</gene>
<accession>A0A023PYJ7</accession>
<organism>
    <name type="scientific">Saccharomyces cerevisiae (strain ATCC 204508 / S288c)</name>
    <name type="common">Baker's yeast</name>
    <dbReference type="NCBI Taxonomy" id="559292"/>
    <lineage>
        <taxon>Eukaryota</taxon>
        <taxon>Fungi</taxon>
        <taxon>Dikarya</taxon>
        <taxon>Ascomycota</taxon>
        <taxon>Saccharomycotina</taxon>
        <taxon>Saccharomycetes</taxon>
        <taxon>Saccharomycetales</taxon>
        <taxon>Saccharomycetaceae</taxon>
        <taxon>Saccharomyces</taxon>
    </lineage>
</organism>
<reference key="1">
    <citation type="journal article" date="1997" name="Nature">
        <title>The nucleotide sequence of Saccharomyces cerevisiae chromosome XIII.</title>
        <authorList>
            <person name="Bowman S."/>
            <person name="Churcher C.M."/>
            <person name="Badcock K."/>
            <person name="Brown D."/>
            <person name="Chillingworth T."/>
            <person name="Connor R."/>
            <person name="Dedman K."/>
            <person name="Devlin K."/>
            <person name="Gentles S."/>
            <person name="Hamlin N."/>
            <person name="Hunt S."/>
            <person name="Jagels K."/>
            <person name="Lye G."/>
            <person name="Moule S."/>
            <person name="Odell C."/>
            <person name="Pearson D."/>
            <person name="Rajandream M.A."/>
            <person name="Rice P."/>
            <person name="Skelton J."/>
            <person name="Walsh S.V."/>
            <person name="Whitehead S."/>
            <person name="Barrell B.G."/>
        </authorList>
    </citation>
    <scope>NUCLEOTIDE SEQUENCE [LARGE SCALE GENOMIC DNA]</scope>
    <source>
        <strain>ATCC 204508 / S288c</strain>
    </source>
</reference>
<reference key="2">
    <citation type="journal article" date="2014" name="G3 (Bethesda)">
        <title>The reference genome sequence of Saccharomyces cerevisiae: Then and now.</title>
        <authorList>
            <person name="Engel S.R."/>
            <person name="Dietrich F.S."/>
            <person name="Fisk D.G."/>
            <person name="Binkley G."/>
            <person name="Balakrishnan R."/>
            <person name="Costanzo M.C."/>
            <person name="Dwight S.S."/>
            <person name="Hitz B.C."/>
            <person name="Karra K."/>
            <person name="Nash R.S."/>
            <person name="Weng S."/>
            <person name="Wong E.D."/>
            <person name="Lloyd P."/>
            <person name="Skrzypek M.S."/>
            <person name="Miyasato S.R."/>
            <person name="Simison M."/>
            <person name="Cherry J.M."/>
        </authorList>
    </citation>
    <scope>GENOME REANNOTATION</scope>
    <source>
        <strain>ATCC 204508 / S288c</strain>
    </source>
</reference>
<evidence type="ECO:0000255" key="1"/>
<evidence type="ECO:0000305" key="2"/>
<evidence type="ECO:0000305" key="3">
    <source>
    </source>
</evidence>
<evidence type="ECO:0000312" key="4">
    <source>
        <dbReference type="SGD" id="S000004919"/>
    </source>
</evidence>